<organism>
    <name type="scientific">Kineococcus radiotolerans (strain ATCC BAA-149 / DSM 14245 / SRS30216)</name>
    <dbReference type="NCBI Taxonomy" id="266940"/>
    <lineage>
        <taxon>Bacteria</taxon>
        <taxon>Bacillati</taxon>
        <taxon>Actinomycetota</taxon>
        <taxon>Actinomycetes</taxon>
        <taxon>Kineosporiales</taxon>
        <taxon>Kineosporiaceae</taxon>
        <taxon>Kineococcus</taxon>
    </lineage>
</organism>
<comment type="function">
    <text evidence="1">Catalyzes the condensation of the acetyl group of acetyl-CoA with 3-methyl-2-oxobutanoate (2-ketoisovalerate) to form 3-carboxy-3-hydroxy-4-methylpentanoate (2-isopropylmalate).</text>
</comment>
<comment type="catalytic activity">
    <reaction evidence="1">
        <text>3-methyl-2-oxobutanoate + acetyl-CoA + H2O = (2S)-2-isopropylmalate + CoA + H(+)</text>
        <dbReference type="Rhea" id="RHEA:21524"/>
        <dbReference type="ChEBI" id="CHEBI:1178"/>
        <dbReference type="ChEBI" id="CHEBI:11851"/>
        <dbReference type="ChEBI" id="CHEBI:15377"/>
        <dbReference type="ChEBI" id="CHEBI:15378"/>
        <dbReference type="ChEBI" id="CHEBI:57287"/>
        <dbReference type="ChEBI" id="CHEBI:57288"/>
        <dbReference type="EC" id="2.3.3.13"/>
    </reaction>
</comment>
<comment type="cofactor">
    <cofactor evidence="1">
        <name>Mg(2+)</name>
        <dbReference type="ChEBI" id="CHEBI:18420"/>
    </cofactor>
</comment>
<comment type="pathway">
    <text evidence="1">Amino-acid biosynthesis; L-leucine biosynthesis; L-leucine from 3-methyl-2-oxobutanoate: step 1/4.</text>
</comment>
<comment type="subunit">
    <text evidence="1">Homodimer.</text>
</comment>
<comment type="subcellular location">
    <subcellularLocation>
        <location evidence="1">Cytoplasm</location>
    </subcellularLocation>
</comment>
<comment type="similarity">
    <text evidence="1">Belongs to the alpha-IPM synthase/homocitrate synthase family. LeuA type 2 subfamily.</text>
</comment>
<keyword id="KW-0028">Amino-acid biosynthesis</keyword>
<keyword id="KW-0100">Branched-chain amino acid biosynthesis</keyword>
<keyword id="KW-0963">Cytoplasm</keyword>
<keyword id="KW-0432">Leucine biosynthesis</keyword>
<keyword id="KW-0460">Magnesium</keyword>
<keyword id="KW-0479">Metal-binding</keyword>
<keyword id="KW-1185">Reference proteome</keyword>
<keyword id="KW-0808">Transferase</keyword>
<protein>
    <recommendedName>
        <fullName evidence="1">2-isopropylmalate synthase</fullName>
        <ecNumber evidence="1">2.3.3.13</ecNumber>
    </recommendedName>
    <alternativeName>
        <fullName evidence="1">Alpha-IPM synthase</fullName>
    </alternativeName>
    <alternativeName>
        <fullName evidence="1">Alpha-isopropylmalate synthase</fullName>
    </alternativeName>
</protein>
<accession>A6WDF2</accession>
<gene>
    <name evidence="1" type="primary">leuA</name>
    <name type="ordered locus">Krad_3377</name>
</gene>
<evidence type="ECO:0000255" key="1">
    <source>
        <dbReference type="HAMAP-Rule" id="MF_00572"/>
    </source>
</evidence>
<name>LEU1_KINRD</name>
<feature type="chain" id="PRO_1000082329" description="2-isopropylmalate synthase">
    <location>
        <begin position="1"/>
        <end position="575"/>
    </location>
</feature>
<feature type="domain" description="Pyruvate carboxyltransferase" evidence="1">
    <location>
        <begin position="40"/>
        <end position="314"/>
    </location>
</feature>
<feature type="region of interest" description="Regulatory domain" evidence="1">
    <location>
        <begin position="456"/>
        <end position="575"/>
    </location>
</feature>
<feature type="binding site" evidence="1">
    <location>
        <position position="49"/>
    </location>
    <ligand>
        <name>Mg(2+)</name>
        <dbReference type="ChEBI" id="CHEBI:18420"/>
    </ligand>
</feature>
<feature type="binding site" evidence="1">
    <location>
        <position position="253"/>
    </location>
    <ligand>
        <name>Mg(2+)</name>
        <dbReference type="ChEBI" id="CHEBI:18420"/>
    </ligand>
</feature>
<feature type="binding site" evidence="1">
    <location>
        <position position="255"/>
    </location>
    <ligand>
        <name>Mg(2+)</name>
        <dbReference type="ChEBI" id="CHEBI:18420"/>
    </ligand>
</feature>
<feature type="binding site" evidence="1">
    <location>
        <position position="289"/>
    </location>
    <ligand>
        <name>Mg(2+)</name>
        <dbReference type="ChEBI" id="CHEBI:18420"/>
    </ligand>
</feature>
<dbReference type="EC" id="2.3.3.13" evidence="1"/>
<dbReference type="EMBL" id="CP000750">
    <property type="protein sequence ID" value="ABS04841.1"/>
    <property type="molecule type" value="Genomic_DNA"/>
</dbReference>
<dbReference type="RefSeq" id="WP_012086900.1">
    <property type="nucleotide sequence ID" value="NC_009664.2"/>
</dbReference>
<dbReference type="SMR" id="A6WDF2"/>
<dbReference type="STRING" id="266940.Krad_3377"/>
<dbReference type="KEGG" id="kra:Krad_3377"/>
<dbReference type="eggNOG" id="COG0119">
    <property type="taxonomic scope" value="Bacteria"/>
</dbReference>
<dbReference type="HOGENOM" id="CLU_004588_3_0_11"/>
<dbReference type="OrthoDB" id="9803573at2"/>
<dbReference type="UniPathway" id="UPA00048">
    <property type="reaction ID" value="UER00070"/>
</dbReference>
<dbReference type="Proteomes" id="UP000001116">
    <property type="component" value="Chromosome"/>
</dbReference>
<dbReference type="GO" id="GO:0005737">
    <property type="term" value="C:cytoplasm"/>
    <property type="evidence" value="ECO:0007669"/>
    <property type="project" value="UniProtKB-SubCell"/>
</dbReference>
<dbReference type="GO" id="GO:0003852">
    <property type="term" value="F:2-isopropylmalate synthase activity"/>
    <property type="evidence" value="ECO:0007669"/>
    <property type="project" value="UniProtKB-UniRule"/>
</dbReference>
<dbReference type="GO" id="GO:0003985">
    <property type="term" value="F:acetyl-CoA C-acetyltransferase activity"/>
    <property type="evidence" value="ECO:0007669"/>
    <property type="project" value="UniProtKB-UniRule"/>
</dbReference>
<dbReference type="GO" id="GO:0000287">
    <property type="term" value="F:magnesium ion binding"/>
    <property type="evidence" value="ECO:0007669"/>
    <property type="project" value="UniProtKB-UniRule"/>
</dbReference>
<dbReference type="GO" id="GO:0009098">
    <property type="term" value="P:L-leucine biosynthetic process"/>
    <property type="evidence" value="ECO:0007669"/>
    <property type="project" value="UniProtKB-UniRule"/>
</dbReference>
<dbReference type="CDD" id="cd07942">
    <property type="entry name" value="DRE_TIM_LeuA"/>
    <property type="match status" value="1"/>
</dbReference>
<dbReference type="FunFam" id="3.20.20.70:FF:000045">
    <property type="entry name" value="2-isopropylmalate synthase"/>
    <property type="match status" value="1"/>
</dbReference>
<dbReference type="FunFam" id="3.30.160.270:FF:000006">
    <property type="entry name" value="2-isopropylmalate synthase"/>
    <property type="match status" value="1"/>
</dbReference>
<dbReference type="Gene3D" id="3.30.160.270">
    <property type="match status" value="1"/>
</dbReference>
<dbReference type="Gene3D" id="3.20.20.70">
    <property type="entry name" value="Aldolase class I"/>
    <property type="match status" value="1"/>
</dbReference>
<dbReference type="HAMAP" id="MF_00572">
    <property type="entry name" value="LeuA_type2"/>
    <property type="match status" value="1"/>
</dbReference>
<dbReference type="InterPro" id="IPR013709">
    <property type="entry name" value="2-isopropylmalate_synth_dimer"/>
</dbReference>
<dbReference type="InterPro" id="IPR002034">
    <property type="entry name" value="AIPM/Hcit_synth_CS"/>
</dbReference>
<dbReference type="InterPro" id="IPR013785">
    <property type="entry name" value="Aldolase_TIM"/>
</dbReference>
<dbReference type="InterPro" id="IPR005668">
    <property type="entry name" value="IPM_Synthase"/>
</dbReference>
<dbReference type="InterPro" id="IPR054692">
    <property type="entry name" value="LeuA-like_post-cat"/>
</dbReference>
<dbReference type="InterPro" id="IPR036230">
    <property type="entry name" value="LeuA_allosteric_dom_sf"/>
</dbReference>
<dbReference type="InterPro" id="IPR039371">
    <property type="entry name" value="LeuA_N_DRE-TIM"/>
</dbReference>
<dbReference type="InterPro" id="IPR000891">
    <property type="entry name" value="PYR_CT"/>
</dbReference>
<dbReference type="NCBIfam" id="TIGR00970">
    <property type="entry name" value="leuA_yeast"/>
    <property type="match status" value="1"/>
</dbReference>
<dbReference type="NCBIfam" id="NF002991">
    <property type="entry name" value="PRK03739.1"/>
    <property type="match status" value="1"/>
</dbReference>
<dbReference type="PANTHER" id="PTHR46911">
    <property type="match status" value="1"/>
</dbReference>
<dbReference type="PANTHER" id="PTHR46911:SF1">
    <property type="entry name" value="2-ISOPROPYLMALATE SYNTHASE"/>
    <property type="match status" value="1"/>
</dbReference>
<dbReference type="Pfam" id="PF00682">
    <property type="entry name" value="HMGL-like"/>
    <property type="match status" value="1"/>
</dbReference>
<dbReference type="Pfam" id="PF22615">
    <property type="entry name" value="IPMS_D2"/>
    <property type="match status" value="1"/>
</dbReference>
<dbReference type="Pfam" id="PF08502">
    <property type="entry name" value="LeuA_dimer"/>
    <property type="match status" value="1"/>
</dbReference>
<dbReference type="SMART" id="SM00917">
    <property type="entry name" value="LeuA_dimer"/>
    <property type="match status" value="1"/>
</dbReference>
<dbReference type="SUPFAM" id="SSF110921">
    <property type="entry name" value="2-isopropylmalate synthase LeuA, allosteric (dimerisation) domain"/>
    <property type="match status" value="1"/>
</dbReference>
<dbReference type="SUPFAM" id="SSF51569">
    <property type="entry name" value="Aldolase"/>
    <property type="match status" value="1"/>
</dbReference>
<dbReference type="SUPFAM" id="SSF89000">
    <property type="entry name" value="post-HMGL domain-like"/>
    <property type="match status" value="1"/>
</dbReference>
<dbReference type="PROSITE" id="PS00815">
    <property type="entry name" value="AIPM_HOMOCIT_SYNTH_1"/>
    <property type="match status" value="1"/>
</dbReference>
<dbReference type="PROSITE" id="PS00816">
    <property type="entry name" value="AIPM_HOMOCIT_SYNTH_2"/>
    <property type="match status" value="1"/>
</dbReference>
<dbReference type="PROSITE" id="PS50991">
    <property type="entry name" value="PYR_CT"/>
    <property type="match status" value="1"/>
</dbReference>
<sequence>MQNTQTPSPMPFGKYTPFQDQIRVELPDRTWPTRTITKAPRWCAVDLRDGNQALIDPMNSERKLRMFTLLVQMGYKDIEVGFPSASQTDFDFVRTLIENDLIPDDVRIQVLTQAREHLIERTYESLRGAKQAIVHLYNSTSVLQRRVVFGMDEDGIVDLALQGARLCRKFEETIPGTTVYYEYSPESYTGTELEFAARICNAVVAVFEPTPERQVIVNLPATVEMATPNVYADSIEWMSRHLDQRENVIISLHPHNDRGTGVAAAELGYLAGADRIEGCLFGNGERTGNVDLVTLGMNLFSQGIDPQIDFSDIDHIRRTVEHCNQLPVGERVPYGGDLVFTAFSGSHQDAIKKGLEAMERDAAAAGKTVDEIPWAVPYLPIDPRDVGRSYEAVIRVNSQSGKGGVAYLLKAEHQLDLPRRLQIEFSRVIQERTDAQGGEVSAAQIFDVFSDEYLPSGSGTPEWGRFALRGTRSVSVVDGADTLEVDLHDDGAENTVRGTGNGPIAAFCAALGSRGVDVRVLDYAEHALSAGGDAQAAAYVECAVAGRVLWGVGIDHNITTASLKAIVSAVNRALR</sequence>
<reference key="1">
    <citation type="journal article" date="2008" name="PLoS ONE">
        <title>Survival in nuclear waste, extreme resistance, and potential applications gleaned from the genome sequence of Kineococcus radiotolerans SRS30216.</title>
        <authorList>
            <person name="Bagwell C.E."/>
            <person name="Bhat S."/>
            <person name="Hawkins G.M."/>
            <person name="Smith B.W."/>
            <person name="Biswas T."/>
            <person name="Hoover T.R."/>
            <person name="Saunders E."/>
            <person name="Han C.S."/>
            <person name="Tsodikov O.V."/>
            <person name="Shimkets L.J."/>
        </authorList>
    </citation>
    <scope>NUCLEOTIDE SEQUENCE [LARGE SCALE GENOMIC DNA]</scope>
    <source>
        <strain>ATCC BAA-149 / DSM 14245 / SRS30216</strain>
    </source>
</reference>
<proteinExistence type="inferred from homology"/>